<gene>
    <name evidence="1" type="primary">nhaP2</name>
    <name type="synonym">cvrA</name>
    <name type="ordered locus">SFV_1199</name>
</gene>
<protein>
    <recommendedName>
        <fullName evidence="1">K(+)/H(+) antiporter NhaP2</fullName>
    </recommendedName>
    <alternativeName>
        <fullName evidence="1">Potassium/proton antiporter NhaP2</fullName>
    </alternativeName>
</protein>
<comment type="function">
    <text evidence="1">K(+)/H(+) antiporter that extrudes potassium in exchange for external protons and maintains the internal concentration of potassium under toxic levels.</text>
</comment>
<comment type="catalytic activity">
    <reaction evidence="1">
        <text>K(+)(in) + H(+)(out) = K(+)(out) + H(+)(in)</text>
        <dbReference type="Rhea" id="RHEA:29467"/>
        <dbReference type="ChEBI" id="CHEBI:15378"/>
        <dbReference type="ChEBI" id="CHEBI:29103"/>
    </reaction>
    <physiologicalReaction direction="left-to-right" evidence="1">
        <dbReference type="Rhea" id="RHEA:29468"/>
    </physiologicalReaction>
</comment>
<comment type="subcellular location">
    <subcellularLocation>
        <location evidence="1">Cell inner membrane</location>
        <topology evidence="1">Multi-pass membrane protein</topology>
    </subcellularLocation>
</comment>
<comment type="similarity">
    <text evidence="1">Belongs to the monovalent cation:proton antiporter 1 (CPA1) transporter (TC 2.A.36) family. NhaP2 subfamily.</text>
</comment>
<dbReference type="EMBL" id="CP000266">
    <property type="protein sequence ID" value="ABF03406.1"/>
    <property type="molecule type" value="Genomic_DNA"/>
</dbReference>
<dbReference type="RefSeq" id="WP_000340206.1">
    <property type="nucleotide sequence ID" value="NC_008258.1"/>
</dbReference>
<dbReference type="SMR" id="Q0T5K9"/>
<dbReference type="KEGG" id="sfv:SFV_1199"/>
<dbReference type="HOGENOM" id="CLU_005912_9_2_6"/>
<dbReference type="Proteomes" id="UP000000659">
    <property type="component" value="Chromosome"/>
</dbReference>
<dbReference type="GO" id="GO:0005886">
    <property type="term" value="C:plasma membrane"/>
    <property type="evidence" value="ECO:0007669"/>
    <property type="project" value="UniProtKB-SubCell"/>
</dbReference>
<dbReference type="GO" id="GO:0050660">
    <property type="term" value="F:flavin adenine dinucleotide binding"/>
    <property type="evidence" value="ECO:0007669"/>
    <property type="project" value="InterPro"/>
</dbReference>
<dbReference type="GO" id="GO:0015386">
    <property type="term" value="F:potassium:proton antiporter activity"/>
    <property type="evidence" value="ECO:0007669"/>
    <property type="project" value="UniProtKB-UniRule"/>
</dbReference>
<dbReference type="GO" id="GO:0006884">
    <property type="term" value="P:cell volume homeostasis"/>
    <property type="evidence" value="ECO:0007669"/>
    <property type="project" value="InterPro"/>
</dbReference>
<dbReference type="FunFam" id="1.20.1530.20:FF:000002">
    <property type="entry name" value="K(+)/H(+) antiporter NhaP2"/>
    <property type="match status" value="1"/>
</dbReference>
<dbReference type="FunFam" id="3.30.465.10:FF:000009">
    <property type="entry name" value="K(+)/H(+) antiporter NhaP2"/>
    <property type="match status" value="1"/>
</dbReference>
<dbReference type="FunFam" id="3.30.70.1450:FF:000007">
    <property type="entry name" value="K(+)/H(+) antiporter NhaP2"/>
    <property type="match status" value="1"/>
</dbReference>
<dbReference type="Gene3D" id="1.20.1530.20">
    <property type="match status" value="1"/>
</dbReference>
<dbReference type="Gene3D" id="3.30.465.10">
    <property type="match status" value="1"/>
</dbReference>
<dbReference type="Gene3D" id="3.30.70.1450">
    <property type="entry name" value="Regulator of K+ conductance, C-terminal domain"/>
    <property type="match status" value="1"/>
</dbReference>
<dbReference type="HAMAP" id="MF_01075">
    <property type="entry name" value="NhaP2"/>
    <property type="match status" value="1"/>
</dbReference>
<dbReference type="InterPro" id="IPR006153">
    <property type="entry name" value="Cation/H_exchanger_TM"/>
</dbReference>
<dbReference type="InterPro" id="IPR036318">
    <property type="entry name" value="FAD-bd_PCMH-like_sf"/>
</dbReference>
<dbReference type="InterPro" id="IPR016169">
    <property type="entry name" value="FAD-bd_PCMH_sub2"/>
</dbReference>
<dbReference type="InterPro" id="IPR038770">
    <property type="entry name" value="Na+/solute_symporter_sf"/>
</dbReference>
<dbReference type="InterPro" id="IPR023729">
    <property type="entry name" value="NhaP2"/>
</dbReference>
<dbReference type="InterPro" id="IPR006037">
    <property type="entry name" value="RCK_C"/>
</dbReference>
<dbReference type="InterPro" id="IPR036721">
    <property type="entry name" value="RCK_C_sf"/>
</dbReference>
<dbReference type="InterPro" id="IPR005170">
    <property type="entry name" value="Transptr-assoc_dom"/>
</dbReference>
<dbReference type="NCBIfam" id="NF003714">
    <property type="entry name" value="PRK05326.1-1"/>
    <property type="match status" value="1"/>
</dbReference>
<dbReference type="NCBIfam" id="NF003715">
    <property type="entry name" value="PRK05326.1-2"/>
    <property type="match status" value="1"/>
</dbReference>
<dbReference type="NCBIfam" id="NF003716">
    <property type="entry name" value="PRK05326.1-3"/>
    <property type="match status" value="1"/>
</dbReference>
<dbReference type="PANTHER" id="PTHR32507:SF7">
    <property type="entry name" value="K(+)_H(+) ANTIPORTER NHAP2"/>
    <property type="match status" value="1"/>
</dbReference>
<dbReference type="PANTHER" id="PTHR32507">
    <property type="entry name" value="NA(+)/H(+) ANTIPORTER 1"/>
    <property type="match status" value="1"/>
</dbReference>
<dbReference type="Pfam" id="PF03471">
    <property type="entry name" value="CorC_HlyC"/>
    <property type="match status" value="1"/>
</dbReference>
<dbReference type="Pfam" id="PF00999">
    <property type="entry name" value="Na_H_Exchanger"/>
    <property type="match status" value="1"/>
</dbReference>
<dbReference type="Pfam" id="PF02080">
    <property type="entry name" value="TrkA_C"/>
    <property type="match status" value="1"/>
</dbReference>
<dbReference type="SMART" id="SM01091">
    <property type="entry name" value="CorC_HlyC"/>
    <property type="match status" value="1"/>
</dbReference>
<dbReference type="SUPFAM" id="SSF56176">
    <property type="entry name" value="FAD-binding/transporter-associated domain-like"/>
    <property type="match status" value="1"/>
</dbReference>
<dbReference type="SUPFAM" id="SSF116726">
    <property type="entry name" value="TrkA C-terminal domain-like"/>
    <property type="match status" value="1"/>
</dbReference>
<dbReference type="PROSITE" id="PS51202">
    <property type="entry name" value="RCK_C"/>
    <property type="match status" value="1"/>
</dbReference>
<evidence type="ECO:0000255" key="1">
    <source>
        <dbReference type="HAMAP-Rule" id="MF_01075"/>
    </source>
</evidence>
<name>NHAP2_SHIF8</name>
<sequence length="578" mass="62205">MDATTIISLFILGSILVTSSILLSSFSSRLGIPILVIFLAIGMLAGVDGVGGIPFDNYPFAYMVSNLALAIILLDGGMRTQASSFRVALGPALSLATLGVLITSGLTGMMAAWLFNLDLIEGLLIGAIVGSTDAAAVFSLLGGKGLNERVGSTLEIESGSNDPMAVFLTITLIAMIQQHESSVSWMFVVDILQQFGLGIVIGLGGGYLLLQMINRIALPAGLYPLLALSGGILIFALTTALEGSGILAVYLCGFLLGNRPIRNRYGILQNFDGLAWLAQIAMFLVLGLLVNPSDLLPIAIPALILSAWMIFFARPLSVFAGLLPFRGFNLRERVFISWVGLRGAVPIILAVFPMMAGLENARLFFNVAFFVVLVSLLLQGTSLSWAAKKAKVVVPPVGRPVSRVGLDIHPENPWEQFVYQLSADKWCVGAALRDLHMPKETRIAALFRDNQLLHPTGSTRLREGDVLCVIGRERDLPALGKLFSQSPPVALDQRFFGDFILEASAKYADVALIYGLEDGREYRDKQQTLGEIVQQLLGAAPVVGDQVEFAGMIWTVAEKEDNEVLKIGVRVAEEEAES</sequence>
<proteinExistence type="inferred from homology"/>
<organism>
    <name type="scientific">Shigella flexneri serotype 5b (strain 8401)</name>
    <dbReference type="NCBI Taxonomy" id="373384"/>
    <lineage>
        <taxon>Bacteria</taxon>
        <taxon>Pseudomonadati</taxon>
        <taxon>Pseudomonadota</taxon>
        <taxon>Gammaproteobacteria</taxon>
        <taxon>Enterobacterales</taxon>
        <taxon>Enterobacteriaceae</taxon>
        <taxon>Shigella</taxon>
    </lineage>
</organism>
<reference key="1">
    <citation type="journal article" date="2006" name="BMC Genomics">
        <title>Complete genome sequence of Shigella flexneri 5b and comparison with Shigella flexneri 2a.</title>
        <authorList>
            <person name="Nie H."/>
            <person name="Yang F."/>
            <person name="Zhang X."/>
            <person name="Yang J."/>
            <person name="Chen L."/>
            <person name="Wang J."/>
            <person name="Xiong Z."/>
            <person name="Peng J."/>
            <person name="Sun L."/>
            <person name="Dong J."/>
            <person name="Xue Y."/>
            <person name="Xu X."/>
            <person name="Chen S."/>
            <person name="Yao Z."/>
            <person name="Shen Y."/>
            <person name="Jin Q."/>
        </authorList>
    </citation>
    <scope>NUCLEOTIDE SEQUENCE [LARGE SCALE GENOMIC DNA]</scope>
    <source>
        <strain>8401</strain>
    </source>
</reference>
<accession>Q0T5K9</accession>
<feature type="chain" id="PRO_0000278153" description="K(+)/H(+) antiporter NhaP2">
    <location>
        <begin position="1"/>
        <end position="578"/>
    </location>
</feature>
<feature type="transmembrane region" description="Helical" evidence="1">
    <location>
        <begin position="6"/>
        <end position="26"/>
    </location>
</feature>
<feature type="transmembrane region" description="Helical" evidence="1">
    <location>
        <begin position="30"/>
        <end position="50"/>
    </location>
</feature>
<feature type="transmembrane region" description="Helical" evidence="1">
    <location>
        <begin position="58"/>
        <end position="78"/>
    </location>
</feature>
<feature type="transmembrane region" description="Helical" evidence="1">
    <location>
        <begin position="87"/>
        <end position="107"/>
    </location>
</feature>
<feature type="transmembrane region" description="Helical" evidence="1">
    <location>
        <begin position="109"/>
        <end position="129"/>
    </location>
</feature>
<feature type="transmembrane region" description="Helical" evidence="1">
    <location>
        <begin position="156"/>
        <end position="176"/>
    </location>
</feature>
<feature type="transmembrane region" description="Helical" evidence="1">
    <location>
        <begin position="185"/>
        <end position="205"/>
    </location>
</feature>
<feature type="transmembrane region" description="Helical" evidence="1">
    <location>
        <begin position="216"/>
        <end position="236"/>
    </location>
</feature>
<feature type="transmembrane region" description="Helical" evidence="1">
    <location>
        <begin position="237"/>
        <end position="257"/>
    </location>
</feature>
<feature type="transmembrane region" description="Helical" evidence="1">
    <location>
        <begin position="270"/>
        <end position="290"/>
    </location>
</feature>
<feature type="transmembrane region" description="Helical" evidence="1">
    <location>
        <begin position="293"/>
        <end position="313"/>
    </location>
</feature>
<feature type="transmembrane region" description="Helical" evidence="1">
    <location>
        <begin position="334"/>
        <end position="354"/>
    </location>
</feature>
<feature type="transmembrane region" description="Helical" evidence="1">
    <location>
        <begin position="363"/>
        <end position="383"/>
    </location>
</feature>
<feature type="domain" description="RCK C-terminal" evidence="1">
    <location>
        <begin position="403"/>
        <end position="485"/>
    </location>
</feature>
<keyword id="KW-0050">Antiport</keyword>
<keyword id="KW-0997">Cell inner membrane</keyword>
<keyword id="KW-1003">Cell membrane</keyword>
<keyword id="KW-0406">Ion transport</keyword>
<keyword id="KW-0472">Membrane</keyword>
<keyword id="KW-0630">Potassium</keyword>
<keyword id="KW-0633">Potassium transport</keyword>
<keyword id="KW-0812">Transmembrane</keyword>
<keyword id="KW-1133">Transmembrane helix</keyword>
<keyword id="KW-0813">Transport</keyword>